<comment type="function">
    <text>Crystallins are the dominant structural components of the vertebrate eye lens.</text>
</comment>
<comment type="subunit">
    <text evidence="1">Homo/heterodimer, or complexes of higher-order. The structure of beta-crystallin oligomers seems to be stabilized through interactions between the N-terminal arms (By similarity).</text>
</comment>
<comment type="domain">
    <text>Has a two-domain beta-structure, folded into four very similar Greek key motifs.</text>
</comment>
<comment type="similarity">
    <text evidence="4">Belongs to the beta/gamma-crystallin family.</text>
</comment>
<name>CRBA4_MOUSE</name>
<protein>
    <recommendedName>
        <fullName>Beta-crystallin A4</fullName>
    </recommendedName>
    <alternativeName>
        <fullName>Beta-A4 crystallin</fullName>
    </alternativeName>
</protein>
<dbReference type="EMBL" id="AJ272228">
    <property type="protein sequence ID" value="CAB75586.1"/>
    <property type="molecule type" value="mRNA"/>
</dbReference>
<dbReference type="EMBL" id="BC056444">
    <property type="protein sequence ID" value="AAH56444.1"/>
    <property type="molecule type" value="mRNA"/>
</dbReference>
<dbReference type="EMBL" id="BC058703">
    <property type="protein sequence ID" value="AAH58703.1"/>
    <property type="molecule type" value="mRNA"/>
</dbReference>
<dbReference type="CCDS" id="CCDS19536.1"/>
<dbReference type="RefSeq" id="NP_001299813.1">
    <property type="nucleotide sequence ID" value="NM_001312884.1"/>
</dbReference>
<dbReference type="RefSeq" id="NP_067326.1">
    <property type="nucleotide sequence ID" value="NM_021351.3"/>
</dbReference>
<dbReference type="SMR" id="Q9JJV0"/>
<dbReference type="BioGRID" id="198912">
    <property type="interactions" value="2"/>
</dbReference>
<dbReference type="FunCoup" id="Q9JJV0">
    <property type="interactions" value="3"/>
</dbReference>
<dbReference type="STRING" id="10090.ENSMUSP00000108004"/>
<dbReference type="PhosphoSitePlus" id="Q9JJV0"/>
<dbReference type="PaxDb" id="10090-ENSMUSP00000108004"/>
<dbReference type="ProteomicsDB" id="284116"/>
<dbReference type="Antibodypedia" id="24295">
    <property type="antibodies" value="132 antibodies from 22 providers"/>
</dbReference>
<dbReference type="DNASU" id="12959"/>
<dbReference type="Ensembl" id="ENSMUST00000086629.6">
    <property type="protein sequence ID" value="ENSMUSP00000083826.6"/>
    <property type="gene ID" value="ENSMUSG00000066975.13"/>
</dbReference>
<dbReference type="Ensembl" id="ENSMUST00000112385.8">
    <property type="protein sequence ID" value="ENSMUSP00000108004.2"/>
    <property type="gene ID" value="ENSMUSG00000066975.13"/>
</dbReference>
<dbReference type="GeneID" id="12959"/>
<dbReference type="KEGG" id="mmu:12959"/>
<dbReference type="UCSC" id="uc008yst.1">
    <property type="organism name" value="mouse"/>
</dbReference>
<dbReference type="AGR" id="MGI:102716"/>
<dbReference type="CTD" id="1413"/>
<dbReference type="MGI" id="MGI:102716">
    <property type="gene designation" value="Cryba4"/>
</dbReference>
<dbReference type="VEuPathDB" id="HostDB:ENSMUSG00000066975"/>
<dbReference type="eggNOG" id="ENOG502QTF8">
    <property type="taxonomic scope" value="Eukaryota"/>
</dbReference>
<dbReference type="GeneTree" id="ENSGT00940000160372"/>
<dbReference type="InParanoid" id="Q9JJV0"/>
<dbReference type="OMA" id="EFTSECY"/>
<dbReference type="OrthoDB" id="8688215at2759"/>
<dbReference type="PhylomeDB" id="Q9JJV0"/>
<dbReference type="TreeFam" id="TF331401"/>
<dbReference type="BioGRID-ORCS" id="12959">
    <property type="hits" value="4 hits in 80 CRISPR screens"/>
</dbReference>
<dbReference type="ChiTaRS" id="Cryba4">
    <property type="organism name" value="mouse"/>
</dbReference>
<dbReference type="PRO" id="PR:Q9JJV0"/>
<dbReference type="Proteomes" id="UP000000589">
    <property type="component" value="Chromosome 5"/>
</dbReference>
<dbReference type="RNAct" id="Q9JJV0">
    <property type="molecule type" value="protein"/>
</dbReference>
<dbReference type="Bgee" id="ENSMUSG00000066975">
    <property type="expression patterns" value="Expressed in lens of camera-type eye and 50 other cell types or tissues"/>
</dbReference>
<dbReference type="ExpressionAtlas" id="Q9JJV0">
    <property type="expression patterns" value="baseline and differential"/>
</dbReference>
<dbReference type="GO" id="GO:0042802">
    <property type="term" value="F:identical protein binding"/>
    <property type="evidence" value="ECO:0007669"/>
    <property type="project" value="Ensembl"/>
</dbReference>
<dbReference type="GO" id="GO:0005212">
    <property type="term" value="F:structural constituent of eye lens"/>
    <property type="evidence" value="ECO:0007669"/>
    <property type="project" value="UniProtKB-KW"/>
</dbReference>
<dbReference type="GO" id="GO:0043010">
    <property type="term" value="P:camera-type eye development"/>
    <property type="evidence" value="ECO:0007669"/>
    <property type="project" value="Ensembl"/>
</dbReference>
<dbReference type="GO" id="GO:0007601">
    <property type="term" value="P:visual perception"/>
    <property type="evidence" value="ECO:0007669"/>
    <property type="project" value="Ensembl"/>
</dbReference>
<dbReference type="FunFam" id="2.60.20.10:FF:000004">
    <property type="entry name" value="Crystallin beta A4"/>
    <property type="match status" value="1"/>
</dbReference>
<dbReference type="FunFam" id="2.60.20.10:FF:000002">
    <property type="entry name" value="Crystallin, beta B2"/>
    <property type="match status" value="1"/>
</dbReference>
<dbReference type="Gene3D" id="2.60.20.10">
    <property type="entry name" value="Crystallins"/>
    <property type="match status" value="2"/>
</dbReference>
<dbReference type="InterPro" id="IPR050252">
    <property type="entry name" value="Beta/Gamma-Crystallin"/>
</dbReference>
<dbReference type="InterPro" id="IPR001064">
    <property type="entry name" value="Beta/gamma_crystallin"/>
</dbReference>
<dbReference type="InterPro" id="IPR011024">
    <property type="entry name" value="G_crystallin-like"/>
</dbReference>
<dbReference type="PANTHER" id="PTHR11818:SF19">
    <property type="entry name" value="BETA-CRYSTALLIN A4"/>
    <property type="match status" value="1"/>
</dbReference>
<dbReference type="PANTHER" id="PTHR11818">
    <property type="entry name" value="BETA/GAMMA CRYSTALLIN"/>
    <property type="match status" value="1"/>
</dbReference>
<dbReference type="Pfam" id="PF00030">
    <property type="entry name" value="Crystall"/>
    <property type="match status" value="2"/>
</dbReference>
<dbReference type="PRINTS" id="PR01367">
    <property type="entry name" value="BGCRYSTALLIN"/>
</dbReference>
<dbReference type="SMART" id="SM00247">
    <property type="entry name" value="XTALbg"/>
    <property type="match status" value="2"/>
</dbReference>
<dbReference type="SUPFAM" id="SSF49695">
    <property type="entry name" value="gamma-Crystallin-like"/>
    <property type="match status" value="1"/>
</dbReference>
<dbReference type="PROSITE" id="PS50915">
    <property type="entry name" value="CRYSTALLIN_BETA_GAMMA"/>
    <property type="match status" value="4"/>
</dbReference>
<evidence type="ECO:0000250" key="1"/>
<evidence type="ECO:0000250" key="2">
    <source>
        <dbReference type="UniProtKB" id="P53673"/>
    </source>
</evidence>
<evidence type="ECO:0000255" key="3">
    <source>
        <dbReference type="PROSITE-ProRule" id="PRU00028"/>
    </source>
</evidence>
<evidence type="ECO:0000305" key="4"/>
<keyword id="KW-0007">Acetylation</keyword>
<keyword id="KW-0273">Eye lens protein</keyword>
<keyword id="KW-1185">Reference proteome</keyword>
<keyword id="KW-0677">Repeat</keyword>
<organism>
    <name type="scientific">Mus musculus</name>
    <name type="common">Mouse</name>
    <dbReference type="NCBI Taxonomy" id="10090"/>
    <lineage>
        <taxon>Eukaryota</taxon>
        <taxon>Metazoa</taxon>
        <taxon>Chordata</taxon>
        <taxon>Craniata</taxon>
        <taxon>Vertebrata</taxon>
        <taxon>Euteleostomi</taxon>
        <taxon>Mammalia</taxon>
        <taxon>Eutheria</taxon>
        <taxon>Euarchontoglires</taxon>
        <taxon>Glires</taxon>
        <taxon>Rodentia</taxon>
        <taxon>Myomorpha</taxon>
        <taxon>Muroidea</taxon>
        <taxon>Muridae</taxon>
        <taxon>Murinae</taxon>
        <taxon>Mus</taxon>
        <taxon>Mus</taxon>
    </lineage>
</organism>
<gene>
    <name type="primary">Cryba4</name>
</gene>
<accession>Q9JJV0</accession>
<reference key="1">
    <citation type="submission" date="2000-02" db="EMBL/GenBank/DDBJ databases">
        <title>Sequence analysis of beta-A2-, beta-A4- and beta-B3-crystallin cDNA completes the identification of the members of this gene family in the mouse.</title>
        <authorList>
            <person name="Graw J."/>
        </authorList>
    </citation>
    <scope>NUCLEOTIDE SEQUENCE [MRNA]</scope>
</reference>
<reference key="2">
    <citation type="journal article" date="2004" name="Genome Res.">
        <title>The status, quality, and expansion of the NIH full-length cDNA project: the Mammalian Gene Collection (MGC).</title>
        <authorList>
            <consortium name="The MGC Project Team"/>
        </authorList>
    </citation>
    <scope>NUCLEOTIDE SEQUENCE [LARGE SCALE MRNA]</scope>
    <source>
        <strain>C57BL/6J</strain>
        <tissue>Brain</tissue>
    </source>
</reference>
<proteinExistence type="evidence at transcript level"/>
<sequence length="196" mass="22469">MTLQCTKSAGHWRMVVWDEEGFQGRRHEFTAECPSVLELGFETVRSLKVLSGAWVGFEHAGFQGQQYVLERGDYPGWDAWGGNTAYPAERLTSFRPVACANHRDSRLTIFEQENFLGRKGELNDDYPSLQAMGWDGTEVGSFHVQSGAWVCSQFPGYRGFQYILESDHHSGDYKHFREWGSHAHTFQVQSVRRIQQ</sequence>
<feature type="initiator methionine" description="Removed" evidence="2">
    <location>
        <position position="1"/>
    </location>
</feature>
<feature type="chain" id="PRO_0000057546" description="Beta-crystallin A4">
    <location>
        <begin position="2"/>
        <end position="196"/>
    </location>
</feature>
<feature type="domain" description="Beta/gamma crystallin 'Greek key' 1" evidence="3">
    <location>
        <begin position="12"/>
        <end position="51"/>
    </location>
</feature>
<feature type="domain" description="Beta/gamma crystallin 'Greek key' 2" evidence="3">
    <location>
        <begin position="52"/>
        <end position="98"/>
    </location>
</feature>
<feature type="domain" description="Beta/gamma crystallin 'Greek key' 3" evidence="3">
    <location>
        <begin position="105"/>
        <end position="146"/>
    </location>
</feature>
<feature type="domain" description="Beta/gamma crystallin 'Greek key' 4" evidence="3">
    <location>
        <begin position="147"/>
        <end position="195"/>
    </location>
</feature>
<feature type="region of interest" description="N-terminal arm">
    <location>
        <begin position="2"/>
        <end position="11"/>
    </location>
</feature>
<feature type="region of interest" description="Connecting peptide">
    <location>
        <begin position="99"/>
        <end position="104"/>
    </location>
</feature>
<feature type="modified residue" description="N-acetylthreonine" evidence="2">
    <location>
        <position position="2"/>
    </location>
</feature>